<organism>
    <name type="scientific">Corynebacterium glutamicum (strain ATCC 13032 / DSM 20300 / JCM 1318 / BCRC 11384 / CCUG 27702 / LMG 3730 / NBRC 12168 / NCIMB 10025 / NRRL B-2784 / 534)</name>
    <dbReference type="NCBI Taxonomy" id="196627"/>
    <lineage>
        <taxon>Bacteria</taxon>
        <taxon>Bacillati</taxon>
        <taxon>Actinomycetota</taxon>
        <taxon>Actinomycetes</taxon>
        <taxon>Mycobacteriales</taxon>
        <taxon>Corynebacteriaceae</taxon>
        <taxon>Corynebacterium</taxon>
    </lineage>
</organism>
<feature type="chain" id="PRO_0000057370" description="tRNA pseudouridine synthase A">
    <location>
        <begin position="1"/>
        <end position="289"/>
    </location>
</feature>
<feature type="active site" description="Nucleophile" evidence="1">
    <location>
        <position position="53"/>
    </location>
</feature>
<feature type="binding site" evidence="1">
    <location>
        <position position="119"/>
    </location>
    <ligand>
        <name>substrate</name>
    </ligand>
</feature>
<name>TRUA_CORGL</name>
<reference key="1">
    <citation type="journal article" date="2003" name="Appl. Microbiol. Biotechnol.">
        <title>The Corynebacterium glutamicum genome: features and impacts on biotechnological processes.</title>
        <authorList>
            <person name="Ikeda M."/>
            <person name="Nakagawa S."/>
        </authorList>
    </citation>
    <scope>NUCLEOTIDE SEQUENCE [LARGE SCALE GENOMIC DNA]</scope>
    <source>
        <strain>ATCC 13032 / DSM 20300 / JCM 1318 / BCRC 11384 / CCUG 27702 / LMG 3730 / NBRC 12168 / NCIMB 10025 / NRRL B-2784 / 534</strain>
    </source>
</reference>
<reference key="2">
    <citation type="journal article" date="2003" name="J. Biotechnol.">
        <title>The complete Corynebacterium glutamicum ATCC 13032 genome sequence and its impact on the production of L-aspartate-derived amino acids and vitamins.</title>
        <authorList>
            <person name="Kalinowski J."/>
            <person name="Bathe B."/>
            <person name="Bartels D."/>
            <person name="Bischoff N."/>
            <person name="Bott M."/>
            <person name="Burkovski A."/>
            <person name="Dusch N."/>
            <person name="Eggeling L."/>
            <person name="Eikmanns B.J."/>
            <person name="Gaigalat L."/>
            <person name="Goesmann A."/>
            <person name="Hartmann M."/>
            <person name="Huthmacher K."/>
            <person name="Kraemer R."/>
            <person name="Linke B."/>
            <person name="McHardy A.C."/>
            <person name="Meyer F."/>
            <person name="Moeckel B."/>
            <person name="Pfefferle W."/>
            <person name="Puehler A."/>
            <person name="Rey D.A."/>
            <person name="Rueckert C."/>
            <person name="Rupp O."/>
            <person name="Sahm H."/>
            <person name="Wendisch V.F."/>
            <person name="Wiegraebe I."/>
            <person name="Tauch A."/>
        </authorList>
    </citation>
    <scope>NUCLEOTIDE SEQUENCE [LARGE SCALE GENOMIC DNA]</scope>
    <source>
        <strain>ATCC 13032 / DSM 20300 / JCM 1318 / BCRC 11384 / CCUG 27702 / LMG 3730 / NBRC 12168 / NCIMB 10025 / NRRL B-2784 / 534</strain>
    </source>
</reference>
<protein>
    <recommendedName>
        <fullName evidence="1">tRNA pseudouridine synthase A</fullName>
        <ecNumber evidence="1">5.4.99.12</ecNumber>
    </recommendedName>
    <alternativeName>
        <fullName evidence="1">tRNA pseudouridine(38-40) synthase</fullName>
    </alternativeName>
    <alternativeName>
        <fullName evidence="1">tRNA pseudouridylate synthase I</fullName>
    </alternativeName>
    <alternativeName>
        <fullName evidence="1">tRNA-uridine isomerase I</fullName>
    </alternativeName>
</protein>
<dbReference type="EC" id="5.4.99.12" evidence="1"/>
<dbReference type="EMBL" id="BA000036">
    <property type="protein sequence ID" value="BAB97960.1"/>
    <property type="molecule type" value="Genomic_DNA"/>
</dbReference>
<dbReference type="EMBL" id="BX927149">
    <property type="protein sequence ID" value="CAF19272.1"/>
    <property type="status" value="ALT_INIT"/>
    <property type="molecule type" value="Genomic_DNA"/>
</dbReference>
<dbReference type="RefSeq" id="NP_599803.1">
    <property type="nucleotide sequence ID" value="NC_003450.3"/>
</dbReference>
<dbReference type="SMR" id="Q8NSV0"/>
<dbReference type="STRING" id="196627.cg0657"/>
<dbReference type="KEGG" id="cgb:cg0657"/>
<dbReference type="KEGG" id="cgl:Cgl0567"/>
<dbReference type="PATRIC" id="fig|196627.13.peg.558"/>
<dbReference type="eggNOG" id="COG0101">
    <property type="taxonomic scope" value="Bacteria"/>
</dbReference>
<dbReference type="HOGENOM" id="CLU_014673_0_2_11"/>
<dbReference type="OrthoDB" id="9811823at2"/>
<dbReference type="BioCyc" id="CORYNE:G18NG-10129-MONOMER"/>
<dbReference type="Proteomes" id="UP000000582">
    <property type="component" value="Chromosome"/>
</dbReference>
<dbReference type="Proteomes" id="UP000001009">
    <property type="component" value="Chromosome"/>
</dbReference>
<dbReference type="GO" id="GO:0003723">
    <property type="term" value="F:RNA binding"/>
    <property type="evidence" value="ECO:0007669"/>
    <property type="project" value="InterPro"/>
</dbReference>
<dbReference type="GO" id="GO:0160147">
    <property type="term" value="F:tRNA pseudouridine(38-40) synthase activity"/>
    <property type="evidence" value="ECO:0007669"/>
    <property type="project" value="UniProtKB-EC"/>
</dbReference>
<dbReference type="GO" id="GO:0031119">
    <property type="term" value="P:tRNA pseudouridine synthesis"/>
    <property type="evidence" value="ECO:0007669"/>
    <property type="project" value="UniProtKB-UniRule"/>
</dbReference>
<dbReference type="CDD" id="cd02570">
    <property type="entry name" value="PseudoU_synth_EcTruA"/>
    <property type="match status" value="1"/>
</dbReference>
<dbReference type="FunFam" id="3.30.70.580:FF:000001">
    <property type="entry name" value="tRNA pseudouridine synthase A"/>
    <property type="match status" value="1"/>
</dbReference>
<dbReference type="Gene3D" id="3.30.70.660">
    <property type="entry name" value="Pseudouridine synthase I, catalytic domain, C-terminal subdomain"/>
    <property type="match status" value="1"/>
</dbReference>
<dbReference type="Gene3D" id="3.30.70.580">
    <property type="entry name" value="Pseudouridine synthase I, catalytic domain, N-terminal subdomain"/>
    <property type="match status" value="1"/>
</dbReference>
<dbReference type="HAMAP" id="MF_00171">
    <property type="entry name" value="TruA"/>
    <property type="match status" value="1"/>
</dbReference>
<dbReference type="InterPro" id="IPR020103">
    <property type="entry name" value="PsdUridine_synth_cat_dom_sf"/>
</dbReference>
<dbReference type="InterPro" id="IPR001406">
    <property type="entry name" value="PsdUridine_synth_TruA"/>
</dbReference>
<dbReference type="InterPro" id="IPR020097">
    <property type="entry name" value="PsdUridine_synth_TruA_a/b_dom"/>
</dbReference>
<dbReference type="InterPro" id="IPR020095">
    <property type="entry name" value="PsdUridine_synth_TruA_C"/>
</dbReference>
<dbReference type="InterPro" id="IPR020094">
    <property type="entry name" value="TruA/RsuA/RluB/E/F_N"/>
</dbReference>
<dbReference type="NCBIfam" id="TIGR00071">
    <property type="entry name" value="hisT_truA"/>
    <property type="match status" value="1"/>
</dbReference>
<dbReference type="PANTHER" id="PTHR11142">
    <property type="entry name" value="PSEUDOURIDYLATE SYNTHASE"/>
    <property type="match status" value="1"/>
</dbReference>
<dbReference type="PANTHER" id="PTHR11142:SF0">
    <property type="entry name" value="TRNA PSEUDOURIDINE SYNTHASE-LIKE 1"/>
    <property type="match status" value="1"/>
</dbReference>
<dbReference type="Pfam" id="PF01416">
    <property type="entry name" value="PseudoU_synth_1"/>
    <property type="match status" value="2"/>
</dbReference>
<dbReference type="PIRSF" id="PIRSF001430">
    <property type="entry name" value="tRNA_psdUrid_synth"/>
    <property type="match status" value="1"/>
</dbReference>
<dbReference type="SUPFAM" id="SSF55120">
    <property type="entry name" value="Pseudouridine synthase"/>
    <property type="match status" value="1"/>
</dbReference>
<evidence type="ECO:0000255" key="1">
    <source>
        <dbReference type="HAMAP-Rule" id="MF_00171"/>
    </source>
</evidence>
<evidence type="ECO:0000305" key="2"/>
<accession>Q8NSV0</accession>
<keyword id="KW-0413">Isomerase</keyword>
<keyword id="KW-1185">Reference proteome</keyword>
<keyword id="KW-0819">tRNA processing</keyword>
<gene>
    <name evidence="1" type="primary">truA</name>
    <name type="ordered locus">Cgl0567</name>
    <name type="ordered locus">cg0657</name>
</gene>
<comment type="function">
    <text evidence="1">Formation of pseudouridine at positions 38, 39 and 40 in the anticodon stem and loop of transfer RNAs.</text>
</comment>
<comment type="catalytic activity">
    <reaction evidence="1">
        <text>uridine(38/39/40) in tRNA = pseudouridine(38/39/40) in tRNA</text>
        <dbReference type="Rhea" id="RHEA:22376"/>
        <dbReference type="Rhea" id="RHEA-COMP:10085"/>
        <dbReference type="Rhea" id="RHEA-COMP:10087"/>
        <dbReference type="ChEBI" id="CHEBI:65314"/>
        <dbReference type="ChEBI" id="CHEBI:65315"/>
        <dbReference type="EC" id="5.4.99.12"/>
    </reaction>
</comment>
<comment type="subunit">
    <text evidence="1">Homodimer.</text>
</comment>
<comment type="similarity">
    <text evidence="1">Belongs to the tRNA pseudouridine synthase TruA family.</text>
</comment>
<comment type="sequence caution" evidence="2">
    <conflict type="erroneous initiation">
        <sequence resource="EMBL-CDS" id="CAF19272"/>
    </conflict>
</comment>
<sequence length="289" mass="31992">MRIRLDLAYDGTDFHGWAKQGTSDLRTVQKVLEDNLSMVLRETVELTVAGRTDAGVHAAGQVAHFDIPAHALEQRSIDGDPSKLVRRLGRLLPDDIRVHGVRFAEPGFDARFSAMRRHYVYRITTHPAGALPTRRHDTAQWPKPVELERMQLAADALLGLHDFVAFCKAKPHATTVRELQKFAWKDVSTDIEPQVYEAHVVADAFCWSMVRSLVGSCMAVGEGRRGSGFTAELLDASERSPMVPVAPAKGLSLVGVDYPSADKLQERALETRAVREFPDASASLKLDDE</sequence>
<proteinExistence type="inferred from homology"/>